<gene>
    <name evidence="5" type="primary">UGT100</name>
</gene>
<accession>A0A0K0PVW1</accession>
<protein>
    <recommendedName>
        <fullName evidence="5">UDP-glycosyltransferase 100</fullName>
        <shortName evidence="5 7">UGTPg100</shortName>
        <ecNumber evidence="3">2.4.1.367</ecNumber>
    </recommendedName>
</protein>
<dbReference type="EC" id="2.4.1.367" evidence="3"/>
<dbReference type="EMBL" id="KP795113">
    <property type="protein sequence ID" value="AKQ76388.1"/>
    <property type="molecule type" value="mRNA"/>
</dbReference>
<dbReference type="SMR" id="A0A0K0PVW1"/>
<dbReference type="KEGG" id="ag:AKQ76388"/>
<dbReference type="BioCyc" id="MetaCyc:MONOMER-20535"/>
<dbReference type="BRENDA" id="2.4.1.367">
    <property type="organism ID" value="7895"/>
</dbReference>
<dbReference type="UniPathway" id="UPA00213"/>
<dbReference type="GO" id="GO:0016787">
    <property type="term" value="F:hydrolase activity"/>
    <property type="evidence" value="ECO:0007669"/>
    <property type="project" value="UniProtKB-KW"/>
</dbReference>
<dbReference type="GO" id="GO:0035251">
    <property type="term" value="F:UDP-glucosyltransferase activity"/>
    <property type="evidence" value="ECO:0007669"/>
    <property type="project" value="InterPro"/>
</dbReference>
<dbReference type="GO" id="GO:0002238">
    <property type="term" value="P:response to molecule of fungal origin"/>
    <property type="evidence" value="ECO:0000270"/>
    <property type="project" value="UniProtKB"/>
</dbReference>
<dbReference type="GO" id="GO:0016114">
    <property type="term" value="P:terpenoid biosynthetic process"/>
    <property type="evidence" value="ECO:0007669"/>
    <property type="project" value="UniProtKB-UniPathway"/>
</dbReference>
<dbReference type="CDD" id="cd03784">
    <property type="entry name" value="GT1_Gtf-like"/>
    <property type="match status" value="1"/>
</dbReference>
<dbReference type="FunFam" id="3.40.50.2000:FF:000056">
    <property type="entry name" value="Glycosyltransferase"/>
    <property type="match status" value="1"/>
</dbReference>
<dbReference type="FunFam" id="3.40.50.2000:FF:000080">
    <property type="entry name" value="Glycosyltransferase"/>
    <property type="match status" value="1"/>
</dbReference>
<dbReference type="Gene3D" id="3.40.50.2000">
    <property type="entry name" value="Glycogen Phosphorylase B"/>
    <property type="match status" value="2"/>
</dbReference>
<dbReference type="InterPro" id="IPR050481">
    <property type="entry name" value="UDP-glycosyltransf_plant"/>
</dbReference>
<dbReference type="InterPro" id="IPR002213">
    <property type="entry name" value="UDP_glucos_trans"/>
</dbReference>
<dbReference type="InterPro" id="IPR035595">
    <property type="entry name" value="UDP_glycos_trans_CS"/>
</dbReference>
<dbReference type="PANTHER" id="PTHR48048">
    <property type="entry name" value="GLYCOSYLTRANSFERASE"/>
    <property type="match status" value="1"/>
</dbReference>
<dbReference type="PANTHER" id="PTHR48048:SF45">
    <property type="entry name" value="GLYCOSYLTRANSFERASE"/>
    <property type="match status" value="1"/>
</dbReference>
<dbReference type="Pfam" id="PF00201">
    <property type="entry name" value="UDPGT"/>
    <property type="match status" value="1"/>
</dbReference>
<dbReference type="SUPFAM" id="SSF53756">
    <property type="entry name" value="UDP-Glycosyltransferase/glycogen phosphorylase"/>
    <property type="match status" value="1"/>
</dbReference>
<dbReference type="PROSITE" id="PS00375">
    <property type="entry name" value="UDPGT"/>
    <property type="match status" value="1"/>
</dbReference>
<organism>
    <name type="scientific">Panax ginseng</name>
    <name type="common">Korean ginseng</name>
    <dbReference type="NCBI Taxonomy" id="4054"/>
    <lineage>
        <taxon>Eukaryota</taxon>
        <taxon>Viridiplantae</taxon>
        <taxon>Streptophyta</taxon>
        <taxon>Embryophyta</taxon>
        <taxon>Tracheophyta</taxon>
        <taxon>Spermatophyta</taxon>
        <taxon>Magnoliopsida</taxon>
        <taxon>eudicotyledons</taxon>
        <taxon>Gunneridae</taxon>
        <taxon>Pentapetalae</taxon>
        <taxon>asterids</taxon>
        <taxon>campanulids</taxon>
        <taxon>Apiales</taxon>
        <taxon>Araliaceae</taxon>
        <taxon>Panax</taxon>
    </lineage>
</organism>
<proteinExistence type="evidence at protein level"/>
<name>UGT10_PANGI</name>
<feature type="chain" id="PRO_0000446966" description="UDP-glycosyltransferase 100">
    <location>
        <begin position="1"/>
        <end position="472"/>
    </location>
</feature>
<feature type="active site" description="Proton acceptor" evidence="1">
    <location>
        <position position="15"/>
    </location>
</feature>
<feature type="active site" description="Charge relay" evidence="1">
    <location>
        <position position="117"/>
    </location>
</feature>
<feature type="binding site" evidence="2">
    <location>
        <position position="15"/>
    </location>
    <ligand>
        <name>an anthocyanidin</name>
        <dbReference type="ChEBI" id="CHEBI:143576"/>
    </ligand>
</feature>
<feature type="binding site" evidence="1">
    <location>
        <position position="344"/>
    </location>
    <ligand>
        <name>UDP-alpha-D-glucose</name>
        <dbReference type="ChEBI" id="CHEBI:58885"/>
    </ligand>
</feature>
<feature type="binding site" evidence="1">
    <location>
        <position position="346"/>
    </location>
    <ligand>
        <name>UDP-alpha-D-glucose</name>
        <dbReference type="ChEBI" id="CHEBI:58885"/>
    </ligand>
</feature>
<feature type="binding site" evidence="1">
    <location>
        <position position="361"/>
    </location>
    <ligand>
        <name>UDP-alpha-D-glucose</name>
        <dbReference type="ChEBI" id="CHEBI:58885"/>
    </ligand>
</feature>
<feature type="binding site" evidence="1">
    <location>
        <position position="364"/>
    </location>
    <ligand>
        <name>UDP-alpha-D-glucose</name>
        <dbReference type="ChEBI" id="CHEBI:58885"/>
    </ligand>
</feature>
<feature type="binding site" evidence="1">
    <location>
        <position position="365"/>
    </location>
    <ligand>
        <name>UDP-alpha-D-glucose</name>
        <dbReference type="ChEBI" id="CHEBI:58885"/>
    </ligand>
</feature>
<feature type="binding site" evidence="1">
    <location>
        <position position="366"/>
    </location>
    <ligand>
        <name>UDP-alpha-D-glucose</name>
        <dbReference type="ChEBI" id="CHEBI:58885"/>
    </ligand>
</feature>
<feature type="binding site" evidence="1">
    <location>
        <position position="369"/>
    </location>
    <ligand>
        <name>UDP-alpha-D-glucose</name>
        <dbReference type="ChEBI" id="CHEBI:58885"/>
    </ligand>
</feature>
<feature type="binding site" evidence="2">
    <location>
        <position position="384"/>
    </location>
    <ligand>
        <name>an anthocyanidin</name>
        <dbReference type="ChEBI" id="CHEBI:143576"/>
    </ligand>
</feature>
<feature type="binding site" evidence="1">
    <location>
        <position position="385"/>
    </location>
    <ligand>
        <name>UDP-alpha-D-glucose</name>
        <dbReference type="ChEBI" id="CHEBI:58885"/>
    </ligand>
</feature>
<feature type="binding site" evidence="1">
    <location>
        <position position="386"/>
    </location>
    <ligand>
        <name>UDP-alpha-D-glucose</name>
        <dbReference type="ChEBI" id="CHEBI:58885"/>
    </ligand>
</feature>
<feature type="site" description="Essential for the glycosylation activity toward the C6-OH of protopanaxatriol (PPT)" evidence="3">
    <location>
        <position position="142"/>
    </location>
</feature>
<feature type="site" description="Essential for the glycosylation activity toward the C6-OH of protopanaxatriol (PPT)" evidence="3">
    <location>
        <position position="186"/>
    </location>
</feature>
<feature type="site" description="Essential for the glycosylation activity toward the C6-OH of protopanaxatriol (PPT)" evidence="3">
    <location>
        <position position="338"/>
    </location>
</feature>
<feature type="mutagenesis site" description="Loss of glycosylase activity toward protopanaxatriol (PPT)." evidence="3">
    <original>C</original>
    <variation>H</variation>
    <location>
        <position position="82"/>
    </location>
</feature>
<feature type="mutagenesis site" description="Loss of glycosylase activity toward protopanaxatriol (PPT)." evidence="3">
    <original>A</original>
    <variation>T</variation>
    <location>
        <position position="142"/>
    </location>
</feature>
<feature type="mutagenesis site" description="Loss of glycosylase activity toward protopanaxatriol (PPT)." evidence="3">
    <original>F</original>
    <variation>Y</variation>
    <variation>H</variation>
    <location>
        <position position="144"/>
    </location>
</feature>
<feature type="mutagenesis site" description="Loss of glycosylase activity toward protopanaxatriol (PPT)." evidence="3">
    <original>L</original>
    <variation>S</variation>
    <location>
        <position position="186"/>
    </location>
</feature>
<feature type="mutagenesis site" description="Normal ability to transfer a glucose residue to the C6-OH of protopanaxatriol (PPT)." evidence="3">
    <original>W</original>
    <variation>R</variation>
    <location>
        <position position="205"/>
    </location>
</feature>
<feature type="mutagenesis site" description="Loss of glycosylase activity toward protopanaxatriol (PPT)." evidence="3">
    <original>G</original>
    <variation>R</variation>
    <location>
        <position position="338"/>
    </location>
</feature>
<comment type="function">
    <text evidence="3 4 6">Component of the dammarane-type triterpene saponins (e.g. PPT-type ginsenosides or panaxosides) biosynthetic pathway (PubMed:26032089, PubMed:27746309, PubMed:29378087). Glycosyltransferase that catalyzes the biosynthesis of ginsenoside Rh1 from protopanaxatriol (PPT) and the conversion of ginsenoside F1 to ginsenoside Rg1 (PubMed:26032089, PubMed:27746309).</text>
</comment>
<comment type="catalytic activity">
    <reaction evidence="3">
        <text>(20S)-protopanaxadiol + UDP-alpha-D-glucose = (20S)-ginsenoside C-K + UDP + H(+)</text>
        <dbReference type="Rhea" id="RHEA:57976"/>
        <dbReference type="ChEBI" id="CHEBI:15378"/>
        <dbReference type="ChEBI" id="CHEBI:58223"/>
        <dbReference type="ChEBI" id="CHEBI:58885"/>
        <dbReference type="ChEBI" id="CHEBI:75950"/>
        <dbReference type="ChEBI" id="CHEBI:77146"/>
    </reaction>
    <physiologicalReaction direction="left-to-right" evidence="3">
        <dbReference type="Rhea" id="RHEA:57977"/>
    </physiologicalReaction>
</comment>
<comment type="catalytic activity">
    <reaction evidence="3">
        <text>(20S)-protopanaxatriol + UDP-alpha-D-glucose = (20S)-ginsenoside Rh1 + UDP + H(+)</text>
        <dbReference type="Rhea" id="RHEA:58952"/>
        <dbReference type="ChEBI" id="CHEBI:15378"/>
        <dbReference type="ChEBI" id="CHEBI:58223"/>
        <dbReference type="ChEBI" id="CHEBI:58885"/>
        <dbReference type="ChEBI" id="CHEBI:75951"/>
        <dbReference type="ChEBI" id="CHEBI:142487"/>
        <dbReference type="EC" id="2.4.1.367"/>
    </reaction>
    <physiologicalReaction direction="left-to-right" evidence="3">
        <dbReference type="Rhea" id="RHEA:58953"/>
    </physiologicalReaction>
</comment>
<comment type="catalytic activity">
    <reaction evidence="3">
        <text>(20S)-ginsenoside F1 + UDP-alpha-D-glucose = (20S)-ginsenoside Rg1 + UDP + H(+)</text>
        <dbReference type="Rhea" id="RHEA:58008"/>
        <dbReference type="ChEBI" id="CHEBI:15378"/>
        <dbReference type="ChEBI" id="CHEBI:58223"/>
        <dbReference type="ChEBI" id="CHEBI:58885"/>
        <dbReference type="ChEBI" id="CHEBI:67987"/>
        <dbReference type="ChEBI" id="CHEBI:77150"/>
        <dbReference type="EC" id="2.4.1.367"/>
    </reaction>
    <physiologicalReaction direction="left-to-right" evidence="3">
        <dbReference type="Rhea" id="RHEA:58009"/>
    </physiologicalReaction>
</comment>
<comment type="pathway">
    <text evidence="8">Secondary metabolite biosynthesis; terpenoid biosynthesis.</text>
</comment>
<comment type="induction">
    <text evidence="4">Induced by A.niger mycelium-derived elicitor, thus improving ginsenosides production in adventitious roots culture.</text>
</comment>
<comment type="similarity">
    <text evidence="8">Belongs to the UDP-glycosyltransferase family.</text>
</comment>
<sequence>MKSELIFLPVPAFGHLVGMVEMAKLFISRHENLSVTVLISKFFIDTGIDNYNKSLLAKPTPRLTIINLPEIDPQKYLLKPRCAIFPSLIENQKTHVRDVMSRMTQSESTRVVGLLADILFVDIFDIADEFNVPTYVYSPAGAGFLGLAFHLQTLNDDKKQDVTEFRNSDTELLVPSFANPVPAEFLPSIFLEKDGRHDVLLSLYWRCREAKGIIVNTFEELEPYAINSLRMDSMIPPIYPVGPILNLNGEGQNSDEAAVILGWLDDQPPSSVVFLCFGSFGSFPENQVKEIAMGLERSGHRFLWSLRPCISEGETTLQLKYSNLELPAGFLDRTSCVGKVIGWAPQMAILAHEAVGGFVSHCGWNSVLESVWYGMPVATWPMYGEQQLNAFEMVKELGLAVEIEVDYRNEYNKSDFIVKADEIETKIKKLMMDGKNSKIRKKVKEMKEKSRVAMSENGSSYTSLAKLFEEIM</sequence>
<keyword id="KW-0328">Glycosyltransferase</keyword>
<keyword id="KW-0378">Hydrolase</keyword>
<keyword id="KW-0414">Isoprene biosynthesis</keyword>
<keyword id="KW-0808">Transferase</keyword>
<evidence type="ECO:0000250" key="1">
    <source>
        <dbReference type="UniProtKB" id="A0A0A1HA03"/>
    </source>
</evidence>
<evidence type="ECO:0000250" key="2">
    <source>
        <dbReference type="UniProtKB" id="P51094"/>
    </source>
</evidence>
<evidence type="ECO:0000269" key="3">
    <source>
    </source>
</evidence>
<evidence type="ECO:0000269" key="4">
    <source>
    </source>
</evidence>
<evidence type="ECO:0000303" key="5">
    <source>
    </source>
</evidence>
<evidence type="ECO:0000303" key="6">
    <source>
    </source>
</evidence>
<evidence type="ECO:0000303" key="7">
    <source>
    </source>
</evidence>
<evidence type="ECO:0000305" key="8"/>
<reference key="1">
    <citation type="journal article" date="2015" name="Mol. Plant">
        <title>Characterization of Panax ginseng UDP-glycosyltransferases catalyzing protopanaxatriol and biosyntheses of bioactive ginsenosides F1 and Rh1 in metabolically engineered yeasts.</title>
        <authorList>
            <person name="Wei W."/>
            <person name="Wang P."/>
            <person name="Wei Y."/>
            <person name="Liu Q."/>
            <person name="Yang C."/>
            <person name="Zhao G."/>
            <person name="Yue J."/>
            <person name="Yan X."/>
            <person name="Zhou Z."/>
        </authorList>
    </citation>
    <scope>NUCLEOTIDE SEQUENCE [MRNA]</scope>
    <scope>FUNCTION</scope>
    <scope>CATALYTIC ACTIVITY</scope>
    <scope>MUTAGENESIS OF CYS-82; ALA-142; PHE-144; LEU-186; TRP-205 AND GLY-338</scope>
</reference>
<reference key="2">
    <citation type="journal article" date="2016" name="J. Biotechnol.">
        <title>Fungal elicitors enhance ginsenosides biosynthesis, expression of functional genes as well as signal molecules accumulation in adventitious roots of Panax ginseng C. A. Mey.</title>
        <authorList>
            <person name="Li J."/>
            <person name="Liu S."/>
            <person name="Wang J."/>
            <person name="Li J."/>
            <person name="Liu D."/>
            <person name="Li J."/>
            <person name="Gao W."/>
        </authorList>
    </citation>
    <scope>FUNCTION</scope>
    <scope>INDUCTION BY ASPERGILLUS NIGER</scope>
</reference>
<reference key="3">
    <citation type="journal article" date="2018" name="Biotechnol. Appl. Biochem.">
        <title>Advances in ginsenoside biosynthesis and metabolic regulation.</title>
        <authorList>
            <person name="Lu J."/>
            <person name="Li J."/>
            <person name="Wang S."/>
            <person name="Yao L."/>
            <person name="Liang W."/>
            <person name="Wang J."/>
            <person name="Gao W."/>
        </authorList>
    </citation>
    <scope>REVIEW</scope>
</reference>
<reference key="4">
    <citation type="journal article" date="2018" name="Molecules">
        <title>Progress on the studies of the key enzymes of ginsenoside biosynthesis.</title>
        <authorList>
            <person name="Yang J.-L."/>
            <person name="Hu Z.-F."/>
            <person name="Zhang T.-T."/>
            <person name="Gu A.-D."/>
            <person name="Gong T."/>
            <person name="Zhu P."/>
        </authorList>
    </citation>
    <scope>REVIEW</scope>
    <scope>NOMENCLATURE</scope>
</reference>